<dbReference type="EMBL" id="AE017194">
    <property type="protein sequence ID" value="AAS40430.1"/>
    <property type="molecule type" value="Genomic_DNA"/>
</dbReference>
<dbReference type="SMR" id="Q73BB8"/>
<dbReference type="DNASU" id="2752531"/>
<dbReference type="KEGG" id="bca:BCE_1501"/>
<dbReference type="HOGENOM" id="CLU_012893_6_0_9"/>
<dbReference type="Proteomes" id="UP000002527">
    <property type="component" value="Chromosome"/>
</dbReference>
<dbReference type="GO" id="GO:0005886">
    <property type="term" value="C:plasma membrane"/>
    <property type="evidence" value="ECO:0007669"/>
    <property type="project" value="UniProtKB-SubCell"/>
</dbReference>
<dbReference type="GO" id="GO:0015297">
    <property type="term" value="F:antiporter activity"/>
    <property type="evidence" value="ECO:0007669"/>
    <property type="project" value="UniProtKB-KW"/>
</dbReference>
<dbReference type="GO" id="GO:0042910">
    <property type="term" value="F:xenobiotic transmembrane transporter activity"/>
    <property type="evidence" value="ECO:0007669"/>
    <property type="project" value="InterPro"/>
</dbReference>
<dbReference type="GO" id="GO:0006811">
    <property type="term" value="P:monoatomic ion transport"/>
    <property type="evidence" value="ECO:0007669"/>
    <property type="project" value="UniProtKB-KW"/>
</dbReference>
<dbReference type="CDD" id="cd13131">
    <property type="entry name" value="MATE_NorM_like"/>
    <property type="match status" value="1"/>
</dbReference>
<dbReference type="InterPro" id="IPR002528">
    <property type="entry name" value="MATE_fam"/>
</dbReference>
<dbReference type="InterPro" id="IPR050222">
    <property type="entry name" value="MATE_MdtK"/>
</dbReference>
<dbReference type="InterPro" id="IPR048279">
    <property type="entry name" value="MdtK-like"/>
</dbReference>
<dbReference type="NCBIfam" id="TIGR00797">
    <property type="entry name" value="matE"/>
    <property type="match status" value="1"/>
</dbReference>
<dbReference type="PANTHER" id="PTHR43298:SF2">
    <property type="entry name" value="FMN_FAD EXPORTER YEEO-RELATED"/>
    <property type="match status" value="1"/>
</dbReference>
<dbReference type="PANTHER" id="PTHR43298">
    <property type="entry name" value="MULTIDRUG RESISTANCE PROTEIN NORM-RELATED"/>
    <property type="match status" value="1"/>
</dbReference>
<dbReference type="Pfam" id="PF01554">
    <property type="entry name" value="MatE"/>
    <property type="match status" value="2"/>
</dbReference>
<dbReference type="PIRSF" id="PIRSF006603">
    <property type="entry name" value="DinF"/>
    <property type="match status" value="1"/>
</dbReference>
<gene>
    <name type="primary">norM</name>
    <name type="ordered locus">BCE_1501</name>
</gene>
<name>NORM_BACC1</name>
<evidence type="ECO:0000250" key="1"/>
<evidence type="ECO:0000255" key="2"/>
<evidence type="ECO:0000305" key="3"/>
<protein>
    <recommendedName>
        <fullName>Probable multidrug resistance protein NorM</fullName>
    </recommendedName>
    <alternativeName>
        <fullName>Multidrug-efflux transporter</fullName>
    </alternativeName>
</protein>
<proteinExistence type="inferred from homology"/>
<reference key="1">
    <citation type="journal article" date="2004" name="Nucleic Acids Res.">
        <title>The genome sequence of Bacillus cereus ATCC 10987 reveals metabolic adaptations and a large plasmid related to Bacillus anthracis pXO1.</title>
        <authorList>
            <person name="Rasko D.A."/>
            <person name="Ravel J."/>
            <person name="Oekstad O.A."/>
            <person name="Helgason E."/>
            <person name="Cer R.Z."/>
            <person name="Jiang L."/>
            <person name="Shores K.A."/>
            <person name="Fouts D.E."/>
            <person name="Tourasse N.J."/>
            <person name="Angiuoli S.V."/>
            <person name="Kolonay J.F."/>
            <person name="Nelson W.C."/>
            <person name="Kolstoe A.-B."/>
            <person name="Fraser C.M."/>
            <person name="Read T.D."/>
        </authorList>
    </citation>
    <scope>NUCLEOTIDE SEQUENCE [LARGE SCALE GENOMIC DNA]</scope>
    <source>
        <strain>ATCC 10987 / NRS 248</strain>
    </source>
</reference>
<keyword id="KW-0050">Antiport</keyword>
<keyword id="KW-1003">Cell membrane</keyword>
<keyword id="KW-0406">Ion transport</keyword>
<keyword id="KW-0472">Membrane</keyword>
<keyword id="KW-0812">Transmembrane</keyword>
<keyword id="KW-1133">Transmembrane helix</keyword>
<keyword id="KW-0813">Transport</keyword>
<comment type="function">
    <text evidence="1">Multidrug efflux pump.</text>
</comment>
<comment type="subcellular location">
    <subcellularLocation>
        <location evidence="1">Cell membrane</location>
        <topology evidence="1">Multi-pass membrane protein</topology>
    </subcellularLocation>
</comment>
<comment type="similarity">
    <text evidence="3">Belongs to the multi antimicrobial extrusion (MATE) (TC 2.A.66.1) family.</text>
</comment>
<accession>Q73BB8</accession>
<sequence>MKETSTFSQKLKQFVLLFFPIFITQMSLFAMSFFDTTMSGHASPIDLAGVAIGTSIWIPVSTGLTGILMATTPIVAQLVGSKKKEDVPQVVIQAVYLAICASFVVMLIGFFAVTPILNGMRLEEPVERIAAQFLSIIAIGIIPLFTYTVLRGFIDALGKTRTTMIITLLSLPINVILNYVLIFGHFGFPKLGGVGAAIASTATYWCILIITVMIIRTKEPFASFHIFKQLYRPSLSSWKEFLKLGVPIGFAIFFETSIFAAVTLMMSNFSTTTIAAHQAAMNFASLLYMTPLSLAMAMTIAVGFEVGAKRYNNAKQYGFIGIGLALAFALLYSILLYFFDDEIASIYTTDIQVHHLAKEFLIFAILFQISDAIATPVQGALRGYKDVNVSLIMTLIAYWVIGLPLGYILATYTDWAAKGYWIGLIIGLAFGATFLLIRLFQVQRKYTIENRRSR</sequence>
<organism>
    <name type="scientific">Bacillus cereus (strain ATCC 10987 / NRS 248)</name>
    <dbReference type="NCBI Taxonomy" id="222523"/>
    <lineage>
        <taxon>Bacteria</taxon>
        <taxon>Bacillati</taxon>
        <taxon>Bacillota</taxon>
        <taxon>Bacilli</taxon>
        <taxon>Bacillales</taxon>
        <taxon>Bacillaceae</taxon>
        <taxon>Bacillus</taxon>
        <taxon>Bacillus cereus group</taxon>
    </lineage>
</organism>
<feature type="chain" id="PRO_0000164198" description="Probable multidrug resistance protein NorM">
    <location>
        <begin position="1"/>
        <end position="454"/>
    </location>
</feature>
<feature type="transmembrane region" description="Helical" evidence="2">
    <location>
        <begin position="13"/>
        <end position="32"/>
    </location>
</feature>
<feature type="transmembrane region" description="Helical" evidence="2">
    <location>
        <begin position="47"/>
        <end position="69"/>
    </location>
</feature>
<feature type="transmembrane region" description="Helical" evidence="2">
    <location>
        <begin position="90"/>
        <end position="112"/>
    </location>
</feature>
<feature type="transmembrane region" description="Helical" evidence="2">
    <location>
        <begin position="132"/>
        <end position="154"/>
    </location>
</feature>
<feature type="transmembrane region" description="Helical" evidence="2">
    <location>
        <begin position="166"/>
        <end position="188"/>
    </location>
</feature>
<feature type="transmembrane region" description="Helical" evidence="2">
    <location>
        <begin position="193"/>
        <end position="215"/>
    </location>
</feature>
<feature type="transmembrane region" description="Helical" evidence="2">
    <location>
        <begin position="244"/>
        <end position="266"/>
    </location>
</feature>
<feature type="transmembrane region" description="Helical" evidence="2">
    <location>
        <begin position="286"/>
        <end position="308"/>
    </location>
</feature>
<feature type="transmembrane region" description="Helical" evidence="2">
    <location>
        <begin position="317"/>
        <end position="339"/>
    </location>
</feature>
<feature type="transmembrane region" description="Helical" evidence="2">
    <location>
        <begin position="359"/>
        <end position="381"/>
    </location>
</feature>
<feature type="transmembrane region" description="Helical" evidence="2">
    <location>
        <begin position="388"/>
        <end position="410"/>
    </location>
</feature>
<feature type="transmembrane region" description="Helical" evidence="2">
    <location>
        <begin position="420"/>
        <end position="442"/>
    </location>
</feature>